<proteinExistence type="inferred from homology"/>
<reference key="1">
    <citation type="journal article" date="2002" name="DNA Res.">
        <title>Complete genome structure of the thermophilic cyanobacterium Thermosynechococcus elongatus BP-1.</title>
        <authorList>
            <person name="Nakamura Y."/>
            <person name="Kaneko T."/>
            <person name="Sato S."/>
            <person name="Ikeuchi M."/>
            <person name="Katoh H."/>
            <person name="Sasamoto S."/>
            <person name="Watanabe A."/>
            <person name="Iriguchi M."/>
            <person name="Kawashima K."/>
            <person name="Kimura T."/>
            <person name="Kishida Y."/>
            <person name="Kiyokawa C."/>
            <person name="Kohara M."/>
            <person name="Matsumoto M."/>
            <person name="Matsuno A."/>
            <person name="Nakazaki N."/>
            <person name="Shimpo S."/>
            <person name="Sugimoto M."/>
            <person name="Takeuchi C."/>
            <person name="Yamada M."/>
            <person name="Tabata S."/>
        </authorList>
    </citation>
    <scope>NUCLEOTIDE SEQUENCE [LARGE SCALE GENOMIC DNA]</scope>
    <source>
        <strain>NIES-2133 / IAM M-273 / BP-1</strain>
    </source>
</reference>
<comment type="function">
    <text evidence="1">One of the primary rRNA binding proteins, it binds specifically to the 5'-end of 16S ribosomal RNA.</text>
</comment>
<comment type="subunit">
    <text evidence="1">Part of the 30S ribosomal subunit.</text>
</comment>
<comment type="similarity">
    <text evidence="1">Belongs to the universal ribosomal protein uS17 family.</text>
</comment>
<accession>Q8DMM3</accession>
<sequence>MAVKERVGVVVSDKMQKTVVVAVENRAPHPKYGKIVVKTRRYKAHDENNEAKVGDRVRIRETRPLSRTKRWVIAEILSPRTA</sequence>
<keyword id="KW-1185">Reference proteome</keyword>
<keyword id="KW-0687">Ribonucleoprotein</keyword>
<keyword id="KW-0689">Ribosomal protein</keyword>
<keyword id="KW-0694">RNA-binding</keyword>
<keyword id="KW-0699">rRNA-binding</keyword>
<gene>
    <name evidence="1" type="primary">rpsQ</name>
    <name evidence="1" type="synonym">rps17</name>
    <name type="ordered locus">tsr0090</name>
</gene>
<dbReference type="EMBL" id="BA000039">
    <property type="protein sequence ID" value="BAC07643.1"/>
    <property type="molecule type" value="Genomic_DNA"/>
</dbReference>
<dbReference type="RefSeq" id="NP_680881.1">
    <property type="nucleotide sequence ID" value="NC_004113.1"/>
</dbReference>
<dbReference type="RefSeq" id="WP_011055945.1">
    <property type="nucleotide sequence ID" value="NC_004113.1"/>
</dbReference>
<dbReference type="SMR" id="Q8DMM3"/>
<dbReference type="STRING" id="197221.gene:10746668"/>
<dbReference type="EnsemblBacteria" id="BAC07643">
    <property type="protein sequence ID" value="BAC07643"/>
    <property type="gene ID" value="BAC07643"/>
</dbReference>
<dbReference type="KEGG" id="tel:tsr0090"/>
<dbReference type="PATRIC" id="fig|197221.4.peg.93"/>
<dbReference type="eggNOG" id="COG0186">
    <property type="taxonomic scope" value="Bacteria"/>
</dbReference>
<dbReference type="Proteomes" id="UP000000440">
    <property type="component" value="Chromosome"/>
</dbReference>
<dbReference type="GO" id="GO:0022627">
    <property type="term" value="C:cytosolic small ribosomal subunit"/>
    <property type="evidence" value="ECO:0007669"/>
    <property type="project" value="TreeGrafter"/>
</dbReference>
<dbReference type="GO" id="GO:0019843">
    <property type="term" value="F:rRNA binding"/>
    <property type="evidence" value="ECO:0007669"/>
    <property type="project" value="UniProtKB-UniRule"/>
</dbReference>
<dbReference type="GO" id="GO:0003735">
    <property type="term" value="F:structural constituent of ribosome"/>
    <property type="evidence" value="ECO:0007669"/>
    <property type="project" value="InterPro"/>
</dbReference>
<dbReference type="GO" id="GO:0006412">
    <property type="term" value="P:translation"/>
    <property type="evidence" value="ECO:0007669"/>
    <property type="project" value="UniProtKB-UniRule"/>
</dbReference>
<dbReference type="CDD" id="cd00364">
    <property type="entry name" value="Ribosomal_uS17"/>
    <property type="match status" value="1"/>
</dbReference>
<dbReference type="FunFam" id="2.40.50.140:FF:000123">
    <property type="entry name" value="30S ribosomal protein S17"/>
    <property type="match status" value="1"/>
</dbReference>
<dbReference type="Gene3D" id="2.40.50.140">
    <property type="entry name" value="Nucleic acid-binding proteins"/>
    <property type="match status" value="1"/>
</dbReference>
<dbReference type="HAMAP" id="MF_01345_B">
    <property type="entry name" value="Ribosomal_uS17_B"/>
    <property type="match status" value="1"/>
</dbReference>
<dbReference type="InterPro" id="IPR012340">
    <property type="entry name" value="NA-bd_OB-fold"/>
</dbReference>
<dbReference type="InterPro" id="IPR000266">
    <property type="entry name" value="Ribosomal_uS17"/>
</dbReference>
<dbReference type="InterPro" id="IPR019984">
    <property type="entry name" value="Ribosomal_uS17_bact/chlr"/>
</dbReference>
<dbReference type="InterPro" id="IPR019979">
    <property type="entry name" value="Ribosomal_uS17_CS"/>
</dbReference>
<dbReference type="NCBIfam" id="NF004123">
    <property type="entry name" value="PRK05610.1"/>
    <property type="match status" value="1"/>
</dbReference>
<dbReference type="NCBIfam" id="TIGR03635">
    <property type="entry name" value="uS17_bact"/>
    <property type="match status" value="1"/>
</dbReference>
<dbReference type="PANTHER" id="PTHR10744">
    <property type="entry name" value="40S RIBOSOMAL PROTEIN S11 FAMILY MEMBER"/>
    <property type="match status" value="1"/>
</dbReference>
<dbReference type="PANTHER" id="PTHR10744:SF1">
    <property type="entry name" value="SMALL RIBOSOMAL SUBUNIT PROTEIN US17M"/>
    <property type="match status" value="1"/>
</dbReference>
<dbReference type="Pfam" id="PF00366">
    <property type="entry name" value="Ribosomal_S17"/>
    <property type="match status" value="1"/>
</dbReference>
<dbReference type="PRINTS" id="PR00973">
    <property type="entry name" value="RIBOSOMALS17"/>
</dbReference>
<dbReference type="SUPFAM" id="SSF50249">
    <property type="entry name" value="Nucleic acid-binding proteins"/>
    <property type="match status" value="1"/>
</dbReference>
<dbReference type="PROSITE" id="PS00056">
    <property type="entry name" value="RIBOSOMAL_S17"/>
    <property type="match status" value="1"/>
</dbReference>
<evidence type="ECO:0000255" key="1">
    <source>
        <dbReference type="HAMAP-Rule" id="MF_01345"/>
    </source>
</evidence>
<evidence type="ECO:0000305" key="2"/>
<organism>
    <name type="scientific">Thermosynechococcus vestitus (strain NIES-2133 / IAM M-273 / BP-1)</name>
    <dbReference type="NCBI Taxonomy" id="197221"/>
    <lineage>
        <taxon>Bacteria</taxon>
        <taxon>Bacillati</taxon>
        <taxon>Cyanobacteriota</taxon>
        <taxon>Cyanophyceae</taxon>
        <taxon>Acaryochloridales</taxon>
        <taxon>Thermosynechococcaceae</taxon>
        <taxon>Thermosynechococcus</taxon>
    </lineage>
</organism>
<protein>
    <recommendedName>
        <fullName evidence="1">Small ribosomal subunit protein uS17</fullName>
    </recommendedName>
    <alternativeName>
        <fullName evidence="2">30S ribosomal protein S17</fullName>
    </alternativeName>
</protein>
<feature type="chain" id="PRO_0000233586" description="Small ribosomal subunit protein uS17">
    <location>
        <begin position="1"/>
        <end position="82"/>
    </location>
</feature>
<name>RS17_THEVB</name>